<comment type="function">
    <text>Putative ATP-dependent protease.</text>
</comment>
<comment type="cofactor">
    <cofactor evidence="5">
        <name>Zn(2+)</name>
        <dbReference type="ChEBI" id="CHEBI:29105"/>
    </cofactor>
    <text evidence="5">Binds 1 zinc ion per subunit.</text>
</comment>
<comment type="subcellular location">
    <subcellularLocation>
        <location evidence="4">Mitochondrion membrane</location>
        <topology evidence="4">Single-pass membrane protein</topology>
    </subcellularLocation>
</comment>
<comment type="similarity">
    <text evidence="5">In the N-terminal section; belongs to the AAA ATPase family.</text>
</comment>
<comment type="similarity">
    <text evidence="5">In the C-terminal section; belongs to the peptidase M41 family.</text>
</comment>
<evidence type="ECO:0000250" key="1"/>
<evidence type="ECO:0000255" key="2"/>
<evidence type="ECO:0000256" key="3">
    <source>
        <dbReference type="SAM" id="MobiDB-lite"/>
    </source>
</evidence>
<evidence type="ECO:0000269" key="4">
    <source>
    </source>
</evidence>
<evidence type="ECO:0000305" key="5"/>
<feature type="chain" id="PRO_0000317333" description="ATP-dependent zinc metalloprotease YME1 homolog">
    <location>
        <begin position="1"/>
        <end position="709"/>
    </location>
</feature>
<feature type="transmembrane region" description="Helical" evidence="2">
    <location>
        <begin position="217"/>
        <end position="239"/>
    </location>
</feature>
<feature type="region of interest" description="Disordered" evidence="3">
    <location>
        <begin position="152"/>
        <end position="182"/>
    </location>
</feature>
<feature type="compositionally biased region" description="Low complexity" evidence="3">
    <location>
        <begin position="153"/>
        <end position="165"/>
    </location>
</feature>
<feature type="active site" evidence="1">
    <location>
        <position position="531"/>
    </location>
</feature>
<feature type="binding site" evidence="2">
    <location>
        <begin position="307"/>
        <end position="314"/>
    </location>
    <ligand>
        <name>ATP</name>
        <dbReference type="ChEBI" id="CHEBI:30616"/>
    </ligand>
</feature>
<feature type="binding site" evidence="1">
    <location>
        <position position="530"/>
    </location>
    <ligand>
        <name>Zn(2+)</name>
        <dbReference type="ChEBI" id="CHEBI:29105"/>
        <note>catalytic</note>
    </ligand>
</feature>
<feature type="binding site" evidence="1">
    <location>
        <position position="534"/>
    </location>
    <ligand>
        <name>Zn(2+)</name>
        <dbReference type="ChEBI" id="CHEBI:29105"/>
        <note>catalytic</note>
    </ligand>
</feature>
<feature type="binding site" evidence="1">
    <location>
        <position position="608"/>
    </location>
    <ligand>
        <name>Zn(2+)</name>
        <dbReference type="ChEBI" id="CHEBI:29105"/>
        <note>catalytic</note>
    </ligand>
</feature>
<reference key="1">
    <citation type="journal article" date="2002" name="Nature">
        <title>The genome sequence of Schizosaccharomyces pombe.</title>
        <authorList>
            <person name="Wood V."/>
            <person name="Gwilliam R."/>
            <person name="Rajandream M.A."/>
            <person name="Lyne M.H."/>
            <person name="Lyne R."/>
            <person name="Stewart A."/>
            <person name="Sgouros J.G."/>
            <person name="Peat N."/>
            <person name="Hayles J."/>
            <person name="Baker S.G."/>
            <person name="Basham D."/>
            <person name="Bowman S."/>
            <person name="Brooks K."/>
            <person name="Brown D."/>
            <person name="Brown S."/>
            <person name="Chillingworth T."/>
            <person name="Churcher C.M."/>
            <person name="Collins M."/>
            <person name="Connor R."/>
            <person name="Cronin A."/>
            <person name="Davis P."/>
            <person name="Feltwell T."/>
            <person name="Fraser A."/>
            <person name="Gentles S."/>
            <person name="Goble A."/>
            <person name="Hamlin N."/>
            <person name="Harris D.E."/>
            <person name="Hidalgo J."/>
            <person name="Hodgson G."/>
            <person name="Holroyd S."/>
            <person name="Hornsby T."/>
            <person name="Howarth S."/>
            <person name="Huckle E.J."/>
            <person name="Hunt S."/>
            <person name="Jagels K."/>
            <person name="James K.D."/>
            <person name="Jones L."/>
            <person name="Jones M."/>
            <person name="Leather S."/>
            <person name="McDonald S."/>
            <person name="McLean J."/>
            <person name="Mooney P."/>
            <person name="Moule S."/>
            <person name="Mungall K.L."/>
            <person name="Murphy L.D."/>
            <person name="Niblett D."/>
            <person name="Odell C."/>
            <person name="Oliver K."/>
            <person name="O'Neil S."/>
            <person name="Pearson D."/>
            <person name="Quail M.A."/>
            <person name="Rabbinowitsch E."/>
            <person name="Rutherford K.M."/>
            <person name="Rutter S."/>
            <person name="Saunders D."/>
            <person name="Seeger K."/>
            <person name="Sharp S."/>
            <person name="Skelton J."/>
            <person name="Simmonds M.N."/>
            <person name="Squares R."/>
            <person name="Squares S."/>
            <person name="Stevens K."/>
            <person name="Taylor K."/>
            <person name="Taylor R.G."/>
            <person name="Tivey A."/>
            <person name="Walsh S.V."/>
            <person name="Warren T."/>
            <person name="Whitehead S."/>
            <person name="Woodward J.R."/>
            <person name="Volckaert G."/>
            <person name="Aert R."/>
            <person name="Robben J."/>
            <person name="Grymonprez B."/>
            <person name="Weltjens I."/>
            <person name="Vanstreels E."/>
            <person name="Rieger M."/>
            <person name="Schaefer M."/>
            <person name="Mueller-Auer S."/>
            <person name="Gabel C."/>
            <person name="Fuchs M."/>
            <person name="Duesterhoeft A."/>
            <person name="Fritzc C."/>
            <person name="Holzer E."/>
            <person name="Moestl D."/>
            <person name="Hilbert H."/>
            <person name="Borzym K."/>
            <person name="Langer I."/>
            <person name="Beck A."/>
            <person name="Lehrach H."/>
            <person name="Reinhardt R."/>
            <person name="Pohl T.M."/>
            <person name="Eger P."/>
            <person name="Zimmermann W."/>
            <person name="Wedler H."/>
            <person name="Wambutt R."/>
            <person name="Purnelle B."/>
            <person name="Goffeau A."/>
            <person name="Cadieu E."/>
            <person name="Dreano S."/>
            <person name="Gloux S."/>
            <person name="Lelaure V."/>
            <person name="Mottier S."/>
            <person name="Galibert F."/>
            <person name="Aves S.J."/>
            <person name="Xiang Z."/>
            <person name="Hunt C."/>
            <person name="Moore K."/>
            <person name="Hurst S.M."/>
            <person name="Lucas M."/>
            <person name="Rochet M."/>
            <person name="Gaillardin C."/>
            <person name="Tallada V.A."/>
            <person name="Garzon A."/>
            <person name="Thode G."/>
            <person name="Daga R.R."/>
            <person name="Cruzado L."/>
            <person name="Jimenez J."/>
            <person name="Sanchez M."/>
            <person name="del Rey F."/>
            <person name="Benito J."/>
            <person name="Dominguez A."/>
            <person name="Revuelta J.L."/>
            <person name="Moreno S."/>
            <person name="Armstrong J."/>
            <person name="Forsburg S.L."/>
            <person name="Cerutti L."/>
            <person name="Lowe T."/>
            <person name="McCombie W.R."/>
            <person name="Paulsen I."/>
            <person name="Potashkin J."/>
            <person name="Shpakovski G.V."/>
            <person name="Ussery D."/>
            <person name="Barrell B.G."/>
            <person name="Nurse P."/>
        </authorList>
    </citation>
    <scope>NUCLEOTIDE SEQUENCE [LARGE SCALE GENOMIC DNA]</scope>
    <source>
        <strain>972 / ATCC 24843</strain>
    </source>
</reference>
<reference key="2">
    <citation type="journal article" date="2006" name="Nat. Biotechnol.">
        <title>ORFeome cloning and global analysis of protein localization in the fission yeast Schizosaccharomyces pombe.</title>
        <authorList>
            <person name="Matsuyama A."/>
            <person name="Arai R."/>
            <person name="Yashiroda Y."/>
            <person name="Shirai A."/>
            <person name="Kamata A."/>
            <person name="Sekido S."/>
            <person name="Kobayashi Y."/>
            <person name="Hashimoto A."/>
            <person name="Hamamoto M."/>
            <person name="Hiraoka Y."/>
            <person name="Horinouchi S."/>
            <person name="Yoshida M."/>
        </authorList>
    </citation>
    <scope>SUBCELLULAR LOCATION [LARGE SCALE ANALYSIS]</scope>
</reference>
<proteinExistence type="inferred from homology"/>
<gene>
    <name type="ORF">SPCC965.04c</name>
</gene>
<keyword id="KW-0067">ATP-binding</keyword>
<keyword id="KW-0378">Hydrolase</keyword>
<keyword id="KW-0472">Membrane</keyword>
<keyword id="KW-0479">Metal-binding</keyword>
<keyword id="KW-0482">Metalloprotease</keyword>
<keyword id="KW-0496">Mitochondrion</keyword>
<keyword id="KW-0547">Nucleotide-binding</keyword>
<keyword id="KW-0645">Protease</keyword>
<keyword id="KW-1185">Reference proteome</keyword>
<keyword id="KW-0812">Transmembrane</keyword>
<keyword id="KW-1133">Transmembrane helix</keyword>
<keyword id="KW-0862">Zinc</keyword>
<protein>
    <recommendedName>
        <fullName>ATP-dependent zinc metalloprotease YME1 homolog</fullName>
        <ecNumber>3.4.24.-</ecNumber>
    </recommendedName>
</protein>
<name>YME1_SCHPO</name>
<sequence length="709" mass="78218">MSRVLHPIFLFGKTSFLYSGCSKFGGRLFNNSIVHGWLRTRSYALASGLHPLRKQKLAHFEDLANANMSDPYMQAKLYKELADNFPEAIISRYETQGVARNSACDRYYQEALRKKSWSRSLSNNISLSQSSSSPATSSFSDPKAFSAGVPKFTSDTSSTVSSTPSLNHSLQNSMPPSTPTPPPVWAPTIVSSALGTSSKTPVYVVVDEPRFTKFFRIFKFIAGLSVASYFVLLGMSIFAETSGLNNIMTNTTEQEPMEERAINVRFSDVQGVDEAKEELEEIVDFLRDPTHFTRLGGKLPRGVLLTGPPGTGKTMLARAVAGEANVPFFFMSGSQFDEMYVGVGAKRVRELFAAARKQAPSIIFIDELDAIGQKRNARDAAHMRQTLNQLLVDLDGFSKNEDLAHPVVFIGATNFPESLDPALTRPGRFDRHIHVPLPDVRGRLAILLQHTRHVPLGKDVDLSIIARGTSGFAGADLANLINQAAVYASKNLSTAVSMRDLEWSKDRILMGAERKSAFITPENKLMTAYHEGGHALVALFTKNAMRPYKATIMPRGSSLGMTISLPDMDKDSWTREEYLAMLDVTMGGRAAEELLYGKDKITSGAHNDIDKATQVARRMVTEFGMSDRIGPVSLEAEMDNLSPATRALVESEIKSLLEASYERSLSLLKSHKKELDALATALVDYEFLTAEEMNRVVKGDRDLLRNKLS</sequence>
<accession>O59824</accession>
<dbReference type="EC" id="3.4.24.-"/>
<dbReference type="EMBL" id="CU329672">
    <property type="protein sequence ID" value="CAA19064.1"/>
    <property type="molecule type" value="Genomic_DNA"/>
</dbReference>
<dbReference type="PIR" id="T41657">
    <property type="entry name" value="T41657"/>
</dbReference>
<dbReference type="SMR" id="O59824"/>
<dbReference type="FunCoup" id="O59824">
    <property type="interactions" value="665"/>
</dbReference>
<dbReference type="STRING" id="284812.O59824"/>
<dbReference type="MEROPS" id="M41.026"/>
<dbReference type="PaxDb" id="4896-SPCC965.04c.1"/>
<dbReference type="EnsemblFungi" id="SPCC965.04c.1">
    <property type="protein sequence ID" value="SPCC965.04c.1:pep"/>
    <property type="gene ID" value="SPCC965.04c"/>
</dbReference>
<dbReference type="KEGG" id="spo:2538746"/>
<dbReference type="PomBase" id="SPCC965.04c"/>
<dbReference type="VEuPathDB" id="FungiDB:SPCC965.04c"/>
<dbReference type="eggNOG" id="KOG0734">
    <property type="taxonomic scope" value="Eukaryota"/>
</dbReference>
<dbReference type="HOGENOM" id="CLU_000688_9_3_1"/>
<dbReference type="InParanoid" id="O59824"/>
<dbReference type="OMA" id="MSHFEWA"/>
<dbReference type="PhylomeDB" id="O59824"/>
<dbReference type="Reactome" id="R-SPO-9840373">
    <property type="pathway name" value="Cellular response to mitochondrial stress"/>
</dbReference>
<dbReference type="PRO" id="PR:O59824"/>
<dbReference type="Proteomes" id="UP000002485">
    <property type="component" value="Chromosome III"/>
</dbReference>
<dbReference type="GO" id="GO:0031942">
    <property type="term" value="C:i-AAA complex"/>
    <property type="evidence" value="ECO:0000266"/>
    <property type="project" value="PomBase"/>
</dbReference>
<dbReference type="GO" id="GO:0005743">
    <property type="term" value="C:mitochondrial inner membrane"/>
    <property type="evidence" value="ECO:0000318"/>
    <property type="project" value="GO_Central"/>
</dbReference>
<dbReference type="GO" id="GO:0005739">
    <property type="term" value="C:mitochondrion"/>
    <property type="evidence" value="ECO:0007005"/>
    <property type="project" value="PomBase"/>
</dbReference>
<dbReference type="GO" id="GO:0005524">
    <property type="term" value="F:ATP binding"/>
    <property type="evidence" value="ECO:0007669"/>
    <property type="project" value="UniProtKB-KW"/>
</dbReference>
<dbReference type="GO" id="GO:0016887">
    <property type="term" value="F:ATP hydrolysis activity"/>
    <property type="evidence" value="ECO:0000303"/>
    <property type="project" value="PomBase"/>
</dbReference>
<dbReference type="GO" id="GO:0004176">
    <property type="term" value="F:ATP-dependent peptidase activity"/>
    <property type="evidence" value="ECO:0000318"/>
    <property type="project" value="GO_Central"/>
</dbReference>
<dbReference type="GO" id="GO:0046872">
    <property type="term" value="F:metal ion binding"/>
    <property type="evidence" value="ECO:0007669"/>
    <property type="project" value="UniProtKB-KW"/>
</dbReference>
<dbReference type="GO" id="GO:0004222">
    <property type="term" value="F:metalloendopeptidase activity"/>
    <property type="evidence" value="ECO:0007669"/>
    <property type="project" value="InterPro"/>
</dbReference>
<dbReference type="GO" id="GO:0141164">
    <property type="term" value="P:mitochondrial protein quality control"/>
    <property type="evidence" value="ECO:0000304"/>
    <property type="project" value="PomBase"/>
</dbReference>
<dbReference type="GO" id="GO:0007005">
    <property type="term" value="P:mitochondrion organization"/>
    <property type="evidence" value="ECO:0000318"/>
    <property type="project" value="GO_Central"/>
</dbReference>
<dbReference type="GO" id="GO:0006515">
    <property type="term" value="P:protein quality control for misfolded or incompletely synthesized proteins"/>
    <property type="evidence" value="ECO:0000318"/>
    <property type="project" value="GO_Central"/>
</dbReference>
<dbReference type="CDD" id="cd19501">
    <property type="entry name" value="RecA-like_FtsH"/>
    <property type="match status" value="1"/>
</dbReference>
<dbReference type="FunFam" id="1.10.8.60:FF:000001">
    <property type="entry name" value="ATP-dependent zinc metalloprotease FtsH"/>
    <property type="match status" value="1"/>
</dbReference>
<dbReference type="FunFam" id="1.20.58.760:FF:000002">
    <property type="entry name" value="ATP-dependent zinc metalloprotease FtsH"/>
    <property type="match status" value="1"/>
</dbReference>
<dbReference type="FunFam" id="3.40.50.300:FF:000175">
    <property type="entry name" value="ATP-dependent zinc metalloprotease FTSH 4"/>
    <property type="match status" value="1"/>
</dbReference>
<dbReference type="Gene3D" id="1.10.8.60">
    <property type="match status" value="1"/>
</dbReference>
<dbReference type="Gene3D" id="3.40.50.300">
    <property type="entry name" value="P-loop containing nucleotide triphosphate hydrolases"/>
    <property type="match status" value="1"/>
</dbReference>
<dbReference type="Gene3D" id="1.20.58.760">
    <property type="entry name" value="Peptidase M41"/>
    <property type="match status" value="1"/>
</dbReference>
<dbReference type="HAMAP" id="MF_01458">
    <property type="entry name" value="FtsH"/>
    <property type="match status" value="1"/>
</dbReference>
<dbReference type="InterPro" id="IPR003593">
    <property type="entry name" value="AAA+_ATPase"/>
</dbReference>
<dbReference type="InterPro" id="IPR041569">
    <property type="entry name" value="AAA_lid_3"/>
</dbReference>
<dbReference type="InterPro" id="IPR003959">
    <property type="entry name" value="ATPase_AAA_core"/>
</dbReference>
<dbReference type="InterPro" id="IPR005936">
    <property type="entry name" value="FtsH"/>
</dbReference>
<dbReference type="InterPro" id="IPR027417">
    <property type="entry name" value="P-loop_NTPase"/>
</dbReference>
<dbReference type="InterPro" id="IPR000642">
    <property type="entry name" value="Peptidase_M41"/>
</dbReference>
<dbReference type="InterPro" id="IPR037219">
    <property type="entry name" value="Peptidase_M41-like"/>
</dbReference>
<dbReference type="InterPro" id="IPR048438">
    <property type="entry name" value="Yme1-like_N"/>
</dbReference>
<dbReference type="PANTHER" id="PTHR23076:SF97">
    <property type="entry name" value="ATP-DEPENDENT ZINC METALLOPROTEASE YME1L1"/>
    <property type="match status" value="1"/>
</dbReference>
<dbReference type="PANTHER" id="PTHR23076">
    <property type="entry name" value="METALLOPROTEASE M41 FTSH"/>
    <property type="match status" value="1"/>
</dbReference>
<dbReference type="Pfam" id="PF00004">
    <property type="entry name" value="AAA"/>
    <property type="match status" value="1"/>
</dbReference>
<dbReference type="Pfam" id="PF17862">
    <property type="entry name" value="AAA_lid_3"/>
    <property type="match status" value="1"/>
</dbReference>
<dbReference type="Pfam" id="PF01434">
    <property type="entry name" value="Peptidase_M41"/>
    <property type="match status" value="1"/>
</dbReference>
<dbReference type="Pfam" id="PF21232">
    <property type="entry name" value="Yme1-like_N"/>
    <property type="match status" value="1"/>
</dbReference>
<dbReference type="SMART" id="SM00382">
    <property type="entry name" value="AAA"/>
    <property type="match status" value="1"/>
</dbReference>
<dbReference type="SUPFAM" id="SSF140990">
    <property type="entry name" value="FtsH protease domain-like"/>
    <property type="match status" value="1"/>
</dbReference>
<dbReference type="SUPFAM" id="SSF52540">
    <property type="entry name" value="P-loop containing nucleoside triphosphate hydrolases"/>
    <property type="match status" value="1"/>
</dbReference>
<organism>
    <name type="scientific">Schizosaccharomyces pombe (strain 972 / ATCC 24843)</name>
    <name type="common">Fission yeast</name>
    <dbReference type="NCBI Taxonomy" id="284812"/>
    <lineage>
        <taxon>Eukaryota</taxon>
        <taxon>Fungi</taxon>
        <taxon>Dikarya</taxon>
        <taxon>Ascomycota</taxon>
        <taxon>Taphrinomycotina</taxon>
        <taxon>Schizosaccharomycetes</taxon>
        <taxon>Schizosaccharomycetales</taxon>
        <taxon>Schizosaccharomycetaceae</taxon>
        <taxon>Schizosaccharomyces</taxon>
    </lineage>
</organism>